<sequence length="307" mass="34386">MKFALRLLSVITTFVMLIVLIGGALVTKTGSGLGCGRQWPLCHGRFFPEMNPASIIEWSHRMSTGVSTILVLALAVLCWKKISPVFRETKFLVIMSIIFLLLQALLGALAVVFGSNALVMALHFGISLISFASVLLLALLVFEATRSETKLVKPLHIGKKMQFHIYGLITYTYIVVYTGAYVRHTKSSLACSVFPFCSKDGALPAYFNQWVQMSHRAAALLLFVWIFVAMFHAMKHYKEQKQLYYGWIISAILITLQAISGVMSVYSQLALGYALAHSFFISCLFGVLCYFCLLIARFKYESKEPFK</sequence>
<comment type="function">
    <text evidence="1">Catalyzes the conversion of heme O to heme A by two successive hydroxylations of the methyl group at C8. The first hydroxylation forms heme I, the second hydroxylation results in an unstable dihydroxymethyl group, which spontaneously dehydrates, resulting in the formyl group of heme A.</text>
</comment>
<comment type="catalytic activity">
    <reaction evidence="1">
        <text>Fe(II)-heme o + 2 A + H2O = Fe(II)-heme a + 2 AH2</text>
        <dbReference type="Rhea" id="RHEA:63388"/>
        <dbReference type="ChEBI" id="CHEBI:13193"/>
        <dbReference type="ChEBI" id="CHEBI:15377"/>
        <dbReference type="ChEBI" id="CHEBI:17499"/>
        <dbReference type="ChEBI" id="CHEBI:60530"/>
        <dbReference type="ChEBI" id="CHEBI:61715"/>
        <dbReference type="EC" id="1.17.99.9"/>
    </reaction>
    <physiologicalReaction direction="left-to-right" evidence="1">
        <dbReference type="Rhea" id="RHEA:63389"/>
    </physiologicalReaction>
</comment>
<comment type="cofactor">
    <cofactor evidence="1">
        <name>heme b</name>
        <dbReference type="ChEBI" id="CHEBI:60344"/>
    </cofactor>
</comment>
<comment type="pathway">
    <text evidence="1">Porphyrin-containing compound metabolism; heme A biosynthesis; heme A from heme O: step 1/1.</text>
</comment>
<comment type="subunit">
    <text evidence="1">Interacts with CtaB.</text>
</comment>
<comment type="subcellular location">
    <subcellularLocation>
        <location evidence="1">Cell membrane</location>
        <topology evidence="1">Multi-pass membrane protein</topology>
    </subcellularLocation>
</comment>
<comment type="domain">
    <text evidence="1">The N-half (TM1-TM4) and C-half (TM5-TM8) domains are connected by an intracellular loop. Each domain is formed from four-helix bundles and they align in a pseudo twofold symmetry manner. The N-half domain is the substrate-heme O binding domain and the C-half domain is the cofactor heme B binding domain.</text>
</comment>
<comment type="domain">
    <text evidence="1">The cysteines of disulfide bond Cys-35 and Cys-42 may be involved in transfer of reducing equivalents from quinol in the membrane to the active site of the enzyme.</text>
</comment>
<comment type="similarity">
    <text evidence="1">Belongs to the COX15/CtaA family. Type 1 subfamily.</text>
</comment>
<evidence type="ECO:0000255" key="1">
    <source>
        <dbReference type="HAMAP-Rule" id="MF_01664"/>
    </source>
</evidence>
<proteinExistence type="inferred from homology"/>
<keyword id="KW-1003">Cell membrane</keyword>
<keyword id="KW-1015">Disulfide bond</keyword>
<keyword id="KW-0350">Heme biosynthesis</keyword>
<keyword id="KW-0408">Iron</keyword>
<keyword id="KW-0472">Membrane</keyword>
<keyword id="KW-0479">Metal-binding</keyword>
<keyword id="KW-0560">Oxidoreductase</keyword>
<keyword id="KW-0812">Transmembrane</keyword>
<keyword id="KW-1133">Transmembrane helix</keyword>
<reference key="1">
    <citation type="journal article" date="2007" name="PLoS ONE">
        <title>Paradoxical DNA repair and peroxide resistance gene conservation in Bacillus pumilus SAFR-032.</title>
        <authorList>
            <person name="Gioia J."/>
            <person name="Yerrapragada S."/>
            <person name="Qin X."/>
            <person name="Jiang H."/>
            <person name="Igboeli O.C."/>
            <person name="Muzny D."/>
            <person name="Dugan-Rocha S."/>
            <person name="Ding Y."/>
            <person name="Hawes A."/>
            <person name="Liu W."/>
            <person name="Perez L."/>
            <person name="Kovar C."/>
            <person name="Dinh H."/>
            <person name="Lee S."/>
            <person name="Nazareth L."/>
            <person name="Blyth P."/>
            <person name="Holder M."/>
            <person name="Buhay C."/>
            <person name="Tirumalai M.R."/>
            <person name="Liu Y."/>
            <person name="Dasgupta I."/>
            <person name="Bokhetache L."/>
            <person name="Fujita M."/>
            <person name="Karouia F."/>
            <person name="Eswara Moorthy P."/>
            <person name="Siefert J."/>
            <person name="Uzman A."/>
            <person name="Buzumbo P."/>
            <person name="Verma A."/>
            <person name="Zwiya H."/>
            <person name="McWilliams B.D."/>
            <person name="Olowu A."/>
            <person name="Clinkenbeard K.D."/>
            <person name="Newcombe D."/>
            <person name="Golebiewski L."/>
            <person name="Petrosino J.F."/>
            <person name="Nicholson W.L."/>
            <person name="Fox G.E."/>
            <person name="Venkateswaran K."/>
            <person name="Highlander S.K."/>
            <person name="Weinstock G.M."/>
        </authorList>
    </citation>
    <scope>NUCLEOTIDE SEQUENCE [LARGE SCALE GENOMIC DNA]</scope>
    <source>
        <strain>SAFR-032</strain>
    </source>
</reference>
<protein>
    <recommendedName>
        <fullName evidence="1">Heme A synthase</fullName>
        <shortName evidence="1">HAS</shortName>
        <ecNumber evidence="1">1.17.99.9</ecNumber>
    </recommendedName>
    <alternativeName>
        <fullName evidence="1">Cytochrome aa3-controlling protein</fullName>
    </alternativeName>
</protein>
<accession>A8FCU5</accession>
<gene>
    <name evidence="1" type="primary">ctaA</name>
    <name type="ordered locus">BPUM_1379</name>
</gene>
<name>CTAA_BACP2</name>
<dbReference type="EC" id="1.17.99.9" evidence="1"/>
<dbReference type="EMBL" id="CP000813">
    <property type="protein sequence ID" value="ABV62062.1"/>
    <property type="molecule type" value="Genomic_DNA"/>
</dbReference>
<dbReference type="RefSeq" id="WP_003210766.1">
    <property type="nucleotide sequence ID" value="NZ_VEIS01000003.1"/>
</dbReference>
<dbReference type="SMR" id="A8FCU5"/>
<dbReference type="STRING" id="315750.BPUM_1379"/>
<dbReference type="GeneID" id="5620642"/>
<dbReference type="KEGG" id="bpu:BPUM_1379"/>
<dbReference type="eggNOG" id="COG1612">
    <property type="taxonomic scope" value="Bacteria"/>
</dbReference>
<dbReference type="HOGENOM" id="CLU_041525_3_1_9"/>
<dbReference type="OrthoDB" id="9816428at2"/>
<dbReference type="UniPathway" id="UPA00269">
    <property type="reaction ID" value="UER00713"/>
</dbReference>
<dbReference type="Proteomes" id="UP000001355">
    <property type="component" value="Chromosome"/>
</dbReference>
<dbReference type="GO" id="GO:0005886">
    <property type="term" value="C:plasma membrane"/>
    <property type="evidence" value="ECO:0007669"/>
    <property type="project" value="UniProtKB-SubCell"/>
</dbReference>
<dbReference type="GO" id="GO:0046872">
    <property type="term" value="F:metal ion binding"/>
    <property type="evidence" value="ECO:0007669"/>
    <property type="project" value="UniProtKB-KW"/>
</dbReference>
<dbReference type="GO" id="GO:0016653">
    <property type="term" value="F:oxidoreductase activity, acting on NAD(P)H, heme protein as acceptor"/>
    <property type="evidence" value="ECO:0007669"/>
    <property type="project" value="InterPro"/>
</dbReference>
<dbReference type="GO" id="GO:0006784">
    <property type="term" value="P:heme A biosynthetic process"/>
    <property type="evidence" value="ECO:0007669"/>
    <property type="project" value="UniProtKB-UniRule"/>
</dbReference>
<dbReference type="HAMAP" id="MF_01664">
    <property type="entry name" value="HemeA_synth_type1"/>
    <property type="match status" value="1"/>
</dbReference>
<dbReference type="InterPro" id="IPR003780">
    <property type="entry name" value="COX15/CtaA_fam"/>
</dbReference>
<dbReference type="InterPro" id="IPR050450">
    <property type="entry name" value="COX15/CtaA_HemeA_synthase"/>
</dbReference>
<dbReference type="InterPro" id="IPR023755">
    <property type="entry name" value="HemeA_Synthase_type1"/>
</dbReference>
<dbReference type="PANTHER" id="PTHR35457">
    <property type="entry name" value="HEME A SYNTHASE"/>
    <property type="match status" value="1"/>
</dbReference>
<dbReference type="PANTHER" id="PTHR35457:SF1">
    <property type="entry name" value="HEME A SYNTHASE"/>
    <property type="match status" value="1"/>
</dbReference>
<dbReference type="Pfam" id="PF02628">
    <property type="entry name" value="COX15-CtaA"/>
    <property type="match status" value="1"/>
</dbReference>
<organism>
    <name type="scientific">Bacillus pumilus (strain SAFR-032)</name>
    <dbReference type="NCBI Taxonomy" id="315750"/>
    <lineage>
        <taxon>Bacteria</taxon>
        <taxon>Bacillati</taxon>
        <taxon>Bacillota</taxon>
        <taxon>Bacilli</taxon>
        <taxon>Bacillales</taxon>
        <taxon>Bacillaceae</taxon>
        <taxon>Bacillus</taxon>
    </lineage>
</organism>
<feature type="chain" id="PRO_0000348974" description="Heme A synthase">
    <location>
        <begin position="1"/>
        <end position="307"/>
    </location>
</feature>
<feature type="topological domain" description="Cytoplasmic" evidence="1">
    <location>
        <begin position="1"/>
        <end position="6"/>
    </location>
</feature>
<feature type="transmembrane region" description="Helical" evidence="1">
    <location>
        <begin position="7"/>
        <end position="27"/>
    </location>
</feature>
<feature type="topological domain" description="Extracellular" evidence="1">
    <location>
        <begin position="28"/>
        <end position="65"/>
    </location>
</feature>
<feature type="transmembrane region" description="Helical" evidence="1">
    <location>
        <begin position="66"/>
        <end position="86"/>
    </location>
</feature>
<feature type="topological domain" description="Cytoplasmic" evidence="1">
    <location>
        <begin position="87"/>
        <end position="92"/>
    </location>
</feature>
<feature type="transmembrane region" description="Helical" evidence="1">
    <location>
        <begin position="93"/>
        <end position="113"/>
    </location>
</feature>
<feature type="topological domain" description="Extracellular" evidence="1">
    <location>
        <begin position="114"/>
        <end position="121"/>
    </location>
</feature>
<feature type="transmembrane region" description="Helical" evidence="1">
    <location>
        <begin position="122"/>
        <end position="142"/>
    </location>
</feature>
<feature type="topological domain" description="Cytoplasmic" evidence="1">
    <location>
        <begin position="143"/>
        <end position="161"/>
    </location>
</feature>
<feature type="transmembrane region" description="Helical" evidence="1">
    <location>
        <begin position="162"/>
        <end position="182"/>
    </location>
</feature>
<feature type="topological domain" description="Extracellular" evidence="1">
    <location>
        <begin position="183"/>
        <end position="216"/>
    </location>
</feature>
<feature type="transmembrane region" description="Helical" evidence="1">
    <location>
        <begin position="217"/>
        <end position="237"/>
    </location>
</feature>
<feature type="topological domain" description="Cytoplasmic" evidence="1">
    <location>
        <begin position="238"/>
        <end position="242"/>
    </location>
</feature>
<feature type="transmembrane region" description="Helical" evidence="1">
    <location>
        <begin position="243"/>
        <end position="263"/>
    </location>
</feature>
<feature type="topological domain" description="Extracellular" evidence="1">
    <location>
        <begin position="264"/>
        <end position="274"/>
    </location>
</feature>
<feature type="transmembrane region" description="Helical" evidence="1">
    <location>
        <begin position="275"/>
        <end position="295"/>
    </location>
</feature>
<feature type="topological domain" description="Cytoplasmic" evidence="1">
    <location>
        <begin position="296"/>
        <end position="307"/>
    </location>
</feature>
<feature type="active site" evidence="1">
    <location>
        <position position="57"/>
    </location>
</feature>
<feature type="binding site" description="axial binding residue" evidence="1">
    <location>
        <position position="60"/>
    </location>
    <ligand>
        <name>heme o</name>
        <dbReference type="ChEBI" id="CHEBI:24480"/>
    </ligand>
    <ligandPart>
        <name>Fe</name>
        <dbReference type="ChEBI" id="CHEBI:18248"/>
    </ligandPart>
</feature>
<feature type="binding site" description="axial binding residue" evidence="1">
    <location>
        <position position="123"/>
    </location>
    <ligand>
        <name>heme o</name>
        <dbReference type="ChEBI" id="CHEBI:24480"/>
    </ligand>
    <ligandPart>
        <name>Fe</name>
        <dbReference type="ChEBI" id="CHEBI:18248"/>
    </ligandPart>
</feature>
<feature type="binding site" description="axial binding residue" evidence="1">
    <location>
        <position position="215"/>
    </location>
    <ligand>
        <name>heme b</name>
        <dbReference type="ChEBI" id="CHEBI:60344"/>
    </ligand>
    <ligandPart>
        <name>Fe</name>
        <dbReference type="ChEBI" id="CHEBI:18248"/>
    </ligandPart>
</feature>
<feature type="binding site" description="axial binding residue" evidence="1">
    <location>
        <position position="277"/>
    </location>
    <ligand>
        <name>heme b</name>
        <dbReference type="ChEBI" id="CHEBI:60344"/>
    </ligand>
    <ligandPart>
        <name>Fe</name>
        <dbReference type="ChEBI" id="CHEBI:18248"/>
    </ligandPart>
</feature>
<feature type="disulfide bond" description="Essential for catalytic activity" evidence="1">
    <location>
        <begin position="35"/>
        <end position="42"/>
    </location>
</feature>
<feature type="disulfide bond" evidence="1">
    <location>
        <begin position="191"/>
        <end position="197"/>
    </location>
</feature>